<comment type="function">
    <text evidence="1">Catalyzes a reversible aldol reaction between acetaldehyde and D-glyceraldehyde 3-phosphate to generate 2-deoxy-D-ribose 5-phosphate.</text>
</comment>
<comment type="catalytic activity">
    <reaction evidence="1">
        <text>2-deoxy-D-ribose 5-phosphate = D-glyceraldehyde 3-phosphate + acetaldehyde</text>
        <dbReference type="Rhea" id="RHEA:12821"/>
        <dbReference type="ChEBI" id="CHEBI:15343"/>
        <dbReference type="ChEBI" id="CHEBI:59776"/>
        <dbReference type="ChEBI" id="CHEBI:62877"/>
        <dbReference type="EC" id="4.1.2.4"/>
    </reaction>
</comment>
<comment type="pathway">
    <text evidence="1">Carbohydrate degradation; 2-deoxy-D-ribose 1-phosphate degradation; D-glyceraldehyde 3-phosphate and acetaldehyde from 2-deoxy-alpha-D-ribose 1-phosphate: step 2/2.</text>
</comment>
<comment type="subcellular location">
    <subcellularLocation>
        <location evidence="1">Cytoplasm</location>
    </subcellularLocation>
</comment>
<comment type="similarity">
    <text evidence="1">Belongs to the DeoC/FbaB aldolase family. DeoC type 1 subfamily.</text>
</comment>
<feature type="chain" id="PRO_1000076028" description="Deoxyribose-phosphate aldolase">
    <location>
        <begin position="1"/>
        <end position="218"/>
    </location>
</feature>
<feature type="active site" description="Proton donor/acceptor" evidence="1">
    <location>
        <position position="92"/>
    </location>
</feature>
<feature type="active site" description="Schiff-base intermediate with acetaldehyde" evidence="1">
    <location>
        <position position="155"/>
    </location>
</feature>
<feature type="active site" description="Proton donor/acceptor" evidence="1">
    <location>
        <position position="184"/>
    </location>
</feature>
<sequence>MDKKELAKMIDHTLLKPEANYEQIVKLCKEALEYGFASVCINPCYVNAAYQLLKGSDVKVCTVVGFPLGAATSETKTFEAVQAVNRGASEIDMVINVGYLKSGNHDYVEEDIKTLVNKINGRALVKVIIETCLLNDEEKIIACKLAKKAGAHFVKTSTGFNMSGATSEDVALMYDAVSPNLKVKASGGIRTYEDAIKMINAGASRIGASSSIKIINKK</sequence>
<dbReference type="EC" id="4.1.2.4" evidence="1"/>
<dbReference type="EMBL" id="CP000673">
    <property type="protein sequence ID" value="EDK34789.1"/>
    <property type="molecule type" value="Genomic_DNA"/>
</dbReference>
<dbReference type="RefSeq" id="WP_012103118.1">
    <property type="nucleotide sequence ID" value="NC_009706.1"/>
</dbReference>
<dbReference type="SMR" id="A5N0Z3"/>
<dbReference type="STRING" id="431943.CKL_2777"/>
<dbReference type="KEGG" id="ckl:CKL_2777"/>
<dbReference type="eggNOG" id="COG0274">
    <property type="taxonomic scope" value="Bacteria"/>
</dbReference>
<dbReference type="HOGENOM" id="CLU_053595_0_2_9"/>
<dbReference type="UniPathway" id="UPA00002">
    <property type="reaction ID" value="UER00468"/>
</dbReference>
<dbReference type="Proteomes" id="UP000002411">
    <property type="component" value="Chromosome"/>
</dbReference>
<dbReference type="GO" id="GO:0005737">
    <property type="term" value="C:cytoplasm"/>
    <property type="evidence" value="ECO:0007669"/>
    <property type="project" value="UniProtKB-SubCell"/>
</dbReference>
<dbReference type="GO" id="GO:0004139">
    <property type="term" value="F:deoxyribose-phosphate aldolase activity"/>
    <property type="evidence" value="ECO:0007669"/>
    <property type="project" value="UniProtKB-UniRule"/>
</dbReference>
<dbReference type="GO" id="GO:0006018">
    <property type="term" value="P:2-deoxyribose 1-phosphate catabolic process"/>
    <property type="evidence" value="ECO:0007669"/>
    <property type="project" value="UniProtKB-UniRule"/>
</dbReference>
<dbReference type="GO" id="GO:0016052">
    <property type="term" value="P:carbohydrate catabolic process"/>
    <property type="evidence" value="ECO:0007669"/>
    <property type="project" value="TreeGrafter"/>
</dbReference>
<dbReference type="GO" id="GO:0009264">
    <property type="term" value="P:deoxyribonucleotide catabolic process"/>
    <property type="evidence" value="ECO:0007669"/>
    <property type="project" value="InterPro"/>
</dbReference>
<dbReference type="CDD" id="cd00959">
    <property type="entry name" value="DeoC"/>
    <property type="match status" value="1"/>
</dbReference>
<dbReference type="FunFam" id="3.20.20.70:FF:000044">
    <property type="entry name" value="Deoxyribose-phosphate aldolase"/>
    <property type="match status" value="1"/>
</dbReference>
<dbReference type="Gene3D" id="3.20.20.70">
    <property type="entry name" value="Aldolase class I"/>
    <property type="match status" value="1"/>
</dbReference>
<dbReference type="HAMAP" id="MF_00114">
    <property type="entry name" value="DeoC_type1"/>
    <property type="match status" value="1"/>
</dbReference>
<dbReference type="InterPro" id="IPR013785">
    <property type="entry name" value="Aldolase_TIM"/>
</dbReference>
<dbReference type="InterPro" id="IPR011343">
    <property type="entry name" value="DeoC"/>
</dbReference>
<dbReference type="InterPro" id="IPR002915">
    <property type="entry name" value="DeoC/FbaB/LacD_aldolase"/>
</dbReference>
<dbReference type="InterPro" id="IPR028581">
    <property type="entry name" value="DeoC_typeI"/>
</dbReference>
<dbReference type="NCBIfam" id="TIGR00126">
    <property type="entry name" value="deoC"/>
    <property type="match status" value="1"/>
</dbReference>
<dbReference type="PANTHER" id="PTHR10889">
    <property type="entry name" value="DEOXYRIBOSE-PHOSPHATE ALDOLASE"/>
    <property type="match status" value="1"/>
</dbReference>
<dbReference type="PANTHER" id="PTHR10889:SF1">
    <property type="entry name" value="DEOXYRIBOSE-PHOSPHATE ALDOLASE"/>
    <property type="match status" value="1"/>
</dbReference>
<dbReference type="Pfam" id="PF01791">
    <property type="entry name" value="DeoC"/>
    <property type="match status" value="1"/>
</dbReference>
<dbReference type="PIRSF" id="PIRSF001357">
    <property type="entry name" value="DeoC"/>
    <property type="match status" value="1"/>
</dbReference>
<dbReference type="SMART" id="SM01133">
    <property type="entry name" value="DeoC"/>
    <property type="match status" value="1"/>
</dbReference>
<dbReference type="SUPFAM" id="SSF51569">
    <property type="entry name" value="Aldolase"/>
    <property type="match status" value="1"/>
</dbReference>
<keyword id="KW-0963">Cytoplasm</keyword>
<keyword id="KW-0456">Lyase</keyword>
<keyword id="KW-1185">Reference proteome</keyword>
<keyword id="KW-0704">Schiff base</keyword>
<gene>
    <name evidence="1" type="primary">deoC</name>
    <name type="ordered locus">CKL_2777</name>
</gene>
<name>DEOC_CLOK5</name>
<protein>
    <recommendedName>
        <fullName evidence="1">Deoxyribose-phosphate aldolase</fullName>
        <shortName evidence="1">DERA</shortName>
        <ecNumber evidence="1">4.1.2.4</ecNumber>
    </recommendedName>
    <alternativeName>
        <fullName evidence="1">2-deoxy-D-ribose 5-phosphate aldolase</fullName>
    </alternativeName>
    <alternativeName>
        <fullName evidence="1">Phosphodeoxyriboaldolase</fullName>
        <shortName evidence="1">Deoxyriboaldolase</shortName>
    </alternativeName>
</protein>
<organism>
    <name type="scientific">Clostridium kluyveri (strain ATCC 8527 / DSM 555 / NBRC 12016 / NCIMB 10680 / K1)</name>
    <dbReference type="NCBI Taxonomy" id="431943"/>
    <lineage>
        <taxon>Bacteria</taxon>
        <taxon>Bacillati</taxon>
        <taxon>Bacillota</taxon>
        <taxon>Clostridia</taxon>
        <taxon>Eubacteriales</taxon>
        <taxon>Clostridiaceae</taxon>
        <taxon>Clostridium</taxon>
    </lineage>
</organism>
<reference key="1">
    <citation type="journal article" date="2008" name="Proc. Natl. Acad. Sci. U.S.A.">
        <title>The genome of Clostridium kluyveri, a strict anaerobe with unique metabolic features.</title>
        <authorList>
            <person name="Seedorf H."/>
            <person name="Fricke W.F."/>
            <person name="Veith B."/>
            <person name="Brueggemann H."/>
            <person name="Liesegang H."/>
            <person name="Strittmatter A."/>
            <person name="Miethke M."/>
            <person name="Buckel W."/>
            <person name="Hinderberger J."/>
            <person name="Li F."/>
            <person name="Hagemeier C."/>
            <person name="Thauer R.K."/>
            <person name="Gottschalk G."/>
        </authorList>
    </citation>
    <scope>NUCLEOTIDE SEQUENCE [LARGE SCALE GENOMIC DNA]</scope>
    <source>
        <strain>ATCC 8527 / DSM 555 / NBRC 12016 / NCIMB 10680 / K1</strain>
    </source>
</reference>
<proteinExistence type="inferred from homology"/>
<evidence type="ECO:0000255" key="1">
    <source>
        <dbReference type="HAMAP-Rule" id="MF_00114"/>
    </source>
</evidence>
<accession>A5N0Z3</accession>